<comment type="function">
    <text evidence="1">NDH-1 shuttles electrons from NADH, via FMN and iron-sulfur (Fe-S) centers, to quinones in the respiratory chain. The immediate electron acceptor for the enzyme in this species is believed to be ubiquinone. Couples the redox reaction to proton translocation (for every two electrons transferred, four hydrogen ions are translocated across the cytoplasmic membrane), and thus conserves the redox energy in a proton gradient.</text>
</comment>
<comment type="catalytic activity">
    <reaction evidence="1">
        <text>a quinone + NADH + 5 H(+)(in) = a quinol + NAD(+) + 4 H(+)(out)</text>
        <dbReference type="Rhea" id="RHEA:57888"/>
        <dbReference type="ChEBI" id="CHEBI:15378"/>
        <dbReference type="ChEBI" id="CHEBI:24646"/>
        <dbReference type="ChEBI" id="CHEBI:57540"/>
        <dbReference type="ChEBI" id="CHEBI:57945"/>
        <dbReference type="ChEBI" id="CHEBI:132124"/>
    </reaction>
</comment>
<comment type="subunit">
    <text evidence="1">NDH-1 is composed of 14 different subunits. Subunits NuoB, C, D, E, F, and G constitute the peripheral sector of the complex.</text>
</comment>
<comment type="subcellular location">
    <subcellularLocation>
        <location evidence="1">Cell inner membrane</location>
        <topology evidence="1">Peripheral membrane protein</topology>
        <orientation evidence="1">Cytoplasmic side</orientation>
    </subcellularLocation>
</comment>
<comment type="similarity">
    <text evidence="1">Belongs to the complex I 30 kDa subunit family.</text>
</comment>
<gene>
    <name evidence="1" type="primary">nuoC</name>
    <name type="ordered locus">NSE_0432</name>
</gene>
<protein>
    <recommendedName>
        <fullName evidence="1">NADH-quinone oxidoreductase subunit C</fullName>
        <ecNumber evidence="1">7.1.1.-</ecNumber>
    </recommendedName>
    <alternativeName>
        <fullName evidence="1">NADH dehydrogenase I subunit C</fullName>
    </alternativeName>
    <alternativeName>
        <fullName evidence="1">NDH-1 subunit C</fullName>
    </alternativeName>
</protein>
<proteinExistence type="inferred from homology"/>
<evidence type="ECO:0000255" key="1">
    <source>
        <dbReference type="HAMAP-Rule" id="MF_01357"/>
    </source>
</evidence>
<evidence type="ECO:0000256" key="2">
    <source>
        <dbReference type="SAM" id="MobiDB-lite"/>
    </source>
</evidence>
<keyword id="KW-0997">Cell inner membrane</keyword>
<keyword id="KW-1003">Cell membrane</keyword>
<keyword id="KW-0472">Membrane</keyword>
<keyword id="KW-0520">NAD</keyword>
<keyword id="KW-0874">Quinone</keyword>
<keyword id="KW-1278">Translocase</keyword>
<keyword id="KW-0813">Transport</keyword>
<keyword id="KW-0830">Ubiquinone</keyword>
<dbReference type="EC" id="7.1.1.-" evidence="1"/>
<dbReference type="EMBL" id="CP000237">
    <property type="protein sequence ID" value="ABD45967.1"/>
    <property type="molecule type" value="Genomic_DNA"/>
</dbReference>
<dbReference type="RefSeq" id="WP_011451824.1">
    <property type="nucleotide sequence ID" value="NC_007798.1"/>
</dbReference>
<dbReference type="SMR" id="Q2GDX8"/>
<dbReference type="STRING" id="222891.NSE_0432"/>
<dbReference type="KEGG" id="nse:NSE_0432"/>
<dbReference type="eggNOG" id="COG0852">
    <property type="taxonomic scope" value="Bacteria"/>
</dbReference>
<dbReference type="HOGENOM" id="CLU_042628_2_1_5"/>
<dbReference type="OrthoDB" id="9803286at2"/>
<dbReference type="Proteomes" id="UP000001942">
    <property type="component" value="Chromosome"/>
</dbReference>
<dbReference type="GO" id="GO:0005886">
    <property type="term" value="C:plasma membrane"/>
    <property type="evidence" value="ECO:0007669"/>
    <property type="project" value="UniProtKB-SubCell"/>
</dbReference>
<dbReference type="GO" id="GO:0008137">
    <property type="term" value="F:NADH dehydrogenase (ubiquinone) activity"/>
    <property type="evidence" value="ECO:0007669"/>
    <property type="project" value="InterPro"/>
</dbReference>
<dbReference type="GO" id="GO:0050136">
    <property type="term" value="F:NADH:ubiquinone reductase (non-electrogenic) activity"/>
    <property type="evidence" value="ECO:0007669"/>
    <property type="project" value="UniProtKB-UniRule"/>
</dbReference>
<dbReference type="GO" id="GO:0048038">
    <property type="term" value="F:quinone binding"/>
    <property type="evidence" value="ECO:0007669"/>
    <property type="project" value="UniProtKB-KW"/>
</dbReference>
<dbReference type="Gene3D" id="3.30.460.80">
    <property type="entry name" value="NADH:ubiquinone oxidoreductase, 30kDa subunit"/>
    <property type="match status" value="1"/>
</dbReference>
<dbReference type="HAMAP" id="MF_01357">
    <property type="entry name" value="NDH1_NuoC"/>
    <property type="match status" value="1"/>
</dbReference>
<dbReference type="InterPro" id="IPR010218">
    <property type="entry name" value="NADH_DH_suC"/>
</dbReference>
<dbReference type="InterPro" id="IPR037232">
    <property type="entry name" value="NADH_quin_OxRdtase_su_C/D-like"/>
</dbReference>
<dbReference type="InterPro" id="IPR001268">
    <property type="entry name" value="NADH_UbQ_OxRdtase_30kDa_su"/>
</dbReference>
<dbReference type="InterPro" id="IPR020396">
    <property type="entry name" value="NADH_UbQ_OxRdtase_CS"/>
</dbReference>
<dbReference type="NCBIfam" id="TIGR01961">
    <property type="entry name" value="NuoC_fam"/>
    <property type="match status" value="1"/>
</dbReference>
<dbReference type="PANTHER" id="PTHR10884:SF14">
    <property type="entry name" value="NADH DEHYDROGENASE [UBIQUINONE] IRON-SULFUR PROTEIN 3, MITOCHONDRIAL"/>
    <property type="match status" value="1"/>
</dbReference>
<dbReference type="PANTHER" id="PTHR10884">
    <property type="entry name" value="NADH DEHYDROGENASE UBIQUINONE IRON-SULFUR PROTEIN 3"/>
    <property type="match status" value="1"/>
</dbReference>
<dbReference type="Pfam" id="PF00329">
    <property type="entry name" value="Complex1_30kDa"/>
    <property type="match status" value="1"/>
</dbReference>
<dbReference type="SUPFAM" id="SSF143243">
    <property type="entry name" value="Nqo5-like"/>
    <property type="match status" value="1"/>
</dbReference>
<dbReference type="PROSITE" id="PS00542">
    <property type="entry name" value="COMPLEX1_30K"/>
    <property type="match status" value="1"/>
</dbReference>
<feature type="chain" id="PRO_0000358148" description="NADH-quinone oxidoreductase subunit C">
    <location>
        <begin position="1"/>
        <end position="186"/>
    </location>
</feature>
<feature type="region of interest" description="Disordered" evidence="2">
    <location>
        <begin position="166"/>
        <end position="186"/>
    </location>
</feature>
<organism>
    <name type="scientific">Neorickettsia sennetsu (strain ATCC VR-367 / Miyayama)</name>
    <name type="common">Ehrlichia sennetsu</name>
    <dbReference type="NCBI Taxonomy" id="222891"/>
    <lineage>
        <taxon>Bacteria</taxon>
        <taxon>Pseudomonadati</taxon>
        <taxon>Pseudomonadota</taxon>
        <taxon>Alphaproteobacteria</taxon>
        <taxon>Rickettsiales</taxon>
        <taxon>Anaplasmataceae</taxon>
        <taxon>Neorickettsia</taxon>
    </lineage>
</organism>
<reference key="1">
    <citation type="journal article" date="2006" name="PLoS Genet.">
        <title>Comparative genomics of emerging human ehrlichiosis agents.</title>
        <authorList>
            <person name="Dunning Hotopp J.C."/>
            <person name="Lin M."/>
            <person name="Madupu R."/>
            <person name="Crabtree J."/>
            <person name="Angiuoli S.V."/>
            <person name="Eisen J.A."/>
            <person name="Seshadri R."/>
            <person name="Ren Q."/>
            <person name="Wu M."/>
            <person name="Utterback T.R."/>
            <person name="Smith S."/>
            <person name="Lewis M."/>
            <person name="Khouri H."/>
            <person name="Zhang C."/>
            <person name="Niu H."/>
            <person name="Lin Q."/>
            <person name="Ohashi N."/>
            <person name="Zhi N."/>
            <person name="Nelson W.C."/>
            <person name="Brinkac L.M."/>
            <person name="Dodson R.J."/>
            <person name="Rosovitz M.J."/>
            <person name="Sundaram J.P."/>
            <person name="Daugherty S.C."/>
            <person name="Davidsen T."/>
            <person name="Durkin A.S."/>
            <person name="Gwinn M.L."/>
            <person name="Haft D.H."/>
            <person name="Selengut J.D."/>
            <person name="Sullivan S.A."/>
            <person name="Zafar N."/>
            <person name="Zhou L."/>
            <person name="Benahmed F."/>
            <person name="Forberger H."/>
            <person name="Halpin R."/>
            <person name="Mulligan S."/>
            <person name="Robinson J."/>
            <person name="White O."/>
            <person name="Rikihisa Y."/>
            <person name="Tettelin H."/>
        </authorList>
    </citation>
    <scope>NUCLEOTIDE SEQUENCE [LARGE SCALE GENOMIC DNA]</scope>
    <source>
        <strain>ATCC VR-367 / Miyayama</strain>
    </source>
</reference>
<name>NUOC_NEOSM</name>
<sequence length="186" mass="21433">MTIDTTEVDALINAPGRCVVNSSLESLVELISHLSSCGFEQLTDIFGIDYLEREKRIEVVYLLLDLKRNRRCCVKVSVDPASEKVPTCCGVFSVANWFEREVYDMYGVVFEGHPDLRRILTDYEFEGFPMLKDFPLTGYKEVRYDLESKEVVYEKVDLSQDYRSFDSLTPWKGVGRPSDPFDGRKE</sequence>
<accession>Q2GDX8</accession>